<name>CP4D2_DROME</name>
<organism>
    <name type="scientific">Drosophila melanogaster</name>
    <name type="common">Fruit fly</name>
    <dbReference type="NCBI Taxonomy" id="7227"/>
    <lineage>
        <taxon>Eukaryota</taxon>
        <taxon>Metazoa</taxon>
        <taxon>Ecdysozoa</taxon>
        <taxon>Arthropoda</taxon>
        <taxon>Hexapoda</taxon>
        <taxon>Insecta</taxon>
        <taxon>Pterygota</taxon>
        <taxon>Neoptera</taxon>
        <taxon>Endopterygota</taxon>
        <taxon>Diptera</taxon>
        <taxon>Brachycera</taxon>
        <taxon>Muscomorpha</taxon>
        <taxon>Ephydroidea</taxon>
        <taxon>Drosophilidae</taxon>
        <taxon>Drosophila</taxon>
        <taxon>Sophophora</taxon>
    </lineage>
</organism>
<accession>Q27589</accession>
<accession>O18651</accession>
<accession>O18674</accession>
<accession>O46053</accession>
<accession>Q27588</accession>
<accession>Q9W514</accession>
<gene>
    <name type="primary">Cyp4d2</name>
    <name type="ORF">CG3466</name>
</gene>
<evidence type="ECO:0000250" key="1"/>
<evidence type="ECO:0000305" key="2"/>
<comment type="function">
    <text evidence="1">Involved in the metabolism of insect hormones and in the breakdown of synthetic insecticides.</text>
</comment>
<comment type="cofactor">
    <cofactor evidence="1">
        <name>heme</name>
        <dbReference type="ChEBI" id="CHEBI:30413"/>
    </cofactor>
</comment>
<comment type="subcellular location">
    <subcellularLocation>
        <location evidence="2">Endoplasmic reticulum membrane</location>
        <topology evidence="2">Peripheral membrane protein</topology>
    </subcellularLocation>
    <subcellularLocation>
        <location evidence="2">Microsome membrane</location>
        <topology evidence="2">Peripheral membrane protein</topology>
    </subcellularLocation>
</comment>
<comment type="similarity">
    <text evidence="2">Belongs to the cytochrome P450 family.</text>
</comment>
<sequence>MLGVVGVLLLVAFATLLLWDFLWRRRGNGILPGPRPLPFLGNLLMYRGLDPEQIMDFVKKNQRKYGRLYRVWILHQLAVFSTDPRDIEFVLSSQQHITKNNLYKLLNCWLGDGLLMSTGRKWHGRRKIITPTFHFKILEQFVEIFDQQSAVMVEQLQSRADGKTPINIFPVICLTALDIIAETAMGTKINAQKNPNLPYVQAVNDVTNILIKRFIHAWQRVDWIFRLTQPTEAKRQDKAIKVMHDFTENIIRERRETLVNNSKETTPEEEVNFLGQKRRMALLDVLLQSTIDGAPLSDEDIREEVDTFMFEGHDTTTSAISFCLYEISRHPEVQQRLQQEIRDVLGEDRKSPVTLRDLGELKFMENVIKESLRLHPPVPMIGRWFAEDVEIRGKHIPAGTNFTMGIFVLLRDPEYFESPDEFRPERFDADVPQIHPYAYIPFSAGPRNCIGQKFAMLEMKSTVSKLLRHFELLPLGPEPRHSMNIVLRSANGVHLGLKPRA</sequence>
<protein>
    <recommendedName>
        <fullName>Cytochrome P450 4d2</fullName>
        <ecNumber>1.14.-.-</ecNumber>
    </recommendedName>
    <alternativeName>
        <fullName>CYPIVD2</fullName>
    </alternativeName>
</protein>
<reference key="1">
    <citation type="journal article" date="1994" name="DNA Cell Biol.">
        <title>Cluster of cytochrome P450 genes on the X chromosome of Drosophila melanogaster.</title>
        <authorList>
            <person name="Frolov M.V."/>
            <person name="Alatortsev V.E."/>
        </authorList>
    </citation>
    <scope>NUCLEOTIDE SEQUENCE [GENOMIC DNA]</scope>
    <source>
        <strain>Oregon-R</strain>
    </source>
</reference>
<reference key="2">
    <citation type="journal article" date="2000" name="Science">
        <title>The genome sequence of Drosophila melanogaster.</title>
        <authorList>
            <person name="Adams M.D."/>
            <person name="Celniker S.E."/>
            <person name="Holt R.A."/>
            <person name="Evans C.A."/>
            <person name="Gocayne J.D."/>
            <person name="Amanatides P.G."/>
            <person name="Scherer S.E."/>
            <person name="Li P.W."/>
            <person name="Hoskins R.A."/>
            <person name="Galle R.F."/>
            <person name="George R.A."/>
            <person name="Lewis S.E."/>
            <person name="Richards S."/>
            <person name="Ashburner M."/>
            <person name="Henderson S.N."/>
            <person name="Sutton G.G."/>
            <person name="Wortman J.R."/>
            <person name="Yandell M.D."/>
            <person name="Zhang Q."/>
            <person name="Chen L.X."/>
            <person name="Brandon R.C."/>
            <person name="Rogers Y.-H.C."/>
            <person name="Blazej R.G."/>
            <person name="Champe M."/>
            <person name="Pfeiffer B.D."/>
            <person name="Wan K.H."/>
            <person name="Doyle C."/>
            <person name="Baxter E.G."/>
            <person name="Helt G."/>
            <person name="Nelson C.R."/>
            <person name="Miklos G.L.G."/>
            <person name="Abril J.F."/>
            <person name="Agbayani A."/>
            <person name="An H.-J."/>
            <person name="Andrews-Pfannkoch C."/>
            <person name="Baldwin D."/>
            <person name="Ballew R.M."/>
            <person name="Basu A."/>
            <person name="Baxendale J."/>
            <person name="Bayraktaroglu L."/>
            <person name="Beasley E.M."/>
            <person name="Beeson K.Y."/>
            <person name="Benos P.V."/>
            <person name="Berman B.P."/>
            <person name="Bhandari D."/>
            <person name="Bolshakov S."/>
            <person name="Borkova D."/>
            <person name="Botchan M.R."/>
            <person name="Bouck J."/>
            <person name="Brokstein P."/>
            <person name="Brottier P."/>
            <person name="Burtis K.C."/>
            <person name="Busam D.A."/>
            <person name="Butler H."/>
            <person name="Cadieu E."/>
            <person name="Center A."/>
            <person name="Chandra I."/>
            <person name="Cherry J.M."/>
            <person name="Cawley S."/>
            <person name="Dahlke C."/>
            <person name="Davenport L.B."/>
            <person name="Davies P."/>
            <person name="de Pablos B."/>
            <person name="Delcher A."/>
            <person name="Deng Z."/>
            <person name="Mays A.D."/>
            <person name="Dew I."/>
            <person name="Dietz S.M."/>
            <person name="Dodson K."/>
            <person name="Doup L.E."/>
            <person name="Downes M."/>
            <person name="Dugan-Rocha S."/>
            <person name="Dunkov B.C."/>
            <person name="Dunn P."/>
            <person name="Durbin K.J."/>
            <person name="Evangelista C.C."/>
            <person name="Ferraz C."/>
            <person name="Ferriera S."/>
            <person name="Fleischmann W."/>
            <person name="Fosler C."/>
            <person name="Gabrielian A.E."/>
            <person name="Garg N.S."/>
            <person name="Gelbart W.M."/>
            <person name="Glasser K."/>
            <person name="Glodek A."/>
            <person name="Gong F."/>
            <person name="Gorrell J.H."/>
            <person name="Gu Z."/>
            <person name="Guan P."/>
            <person name="Harris M."/>
            <person name="Harris N.L."/>
            <person name="Harvey D.A."/>
            <person name="Heiman T.J."/>
            <person name="Hernandez J.R."/>
            <person name="Houck J."/>
            <person name="Hostin D."/>
            <person name="Houston K.A."/>
            <person name="Howland T.J."/>
            <person name="Wei M.-H."/>
            <person name="Ibegwam C."/>
            <person name="Jalali M."/>
            <person name="Kalush F."/>
            <person name="Karpen G.H."/>
            <person name="Ke Z."/>
            <person name="Kennison J.A."/>
            <person name="Ketchum K.A."/>
            <person name="Kimmel B.E."/>
            <person name="Kodira C.D."/>
            <person name="Kraft C.L."/>
            <person name="Kravitz S."/>
            <person name="Kulp D."/>
            <person name="Lai Z."/>
            <person name="Lasko P."/>
            <person name="Lei Y."/>
            <person name="Levitsky A.A."/>
            <person name="Li J.H."/>
            <person name="Li Z."/>
            <person name="Liang Y."/>
            <person name="Lin X."/>
            <person name="Liu X."/>
            <person name="Mattei B."/>
            <person name="McIntosh T.C."/>
            <person name="McLeod M.P."/>
            <person name="McPherson D."/>
            <person name="Merkulov G."/>
            <person name="Milshina N.V."/>
            <person name="Mobarry C."/>
            <person name="Morris J."/>
            <person name="Moshrefi A."/>
            <person name="Mount S.M."/>
            <person name="Moy M."/>
            <person name="Murphy B."/>
            <person name="Murphy L."/>
            <person name="Muzny D.M."/>
            <person name="Nelson D.L."/>
            <person name="Nelson D.R."/>
            <person name="Nelson K.A."/>
            <person name="Nixon K."/>
            <person name="Nusskern D.R."/>
            <person name="Pacleb J.M."/>
            <person name="Palazzolo M."/>
            <person name="Pittman G.S."/>
            <person name="Pan S."/>
            <person name="Pollard J."/>
            <person name="Puri V."/>
            <person name="Reese M.G."/>
            <person name="Reinert K."/>
            <person name="Remington K."/>
            <person name="Saunders R.D.C."/>
            <person name="Scheeler F."/>
            <person name="Shen H."/>
            <person name="Shue B.C."/>
            <person name="Siden-Kiamos I."/>
            <person name="Simpson M."/>
            <person name="Skupski M.P."/>
            <person name="Smith T.J."/>
            <person name="Spier E."/>
            <person name="Spradling A.C."/>
            <person name="Stapleton M."/>
            <person name="Strong R."/>
            <person name="Sun E."/>
            <person name="Svirskas R."/>
            <person name="Tector C."/>
            <person name="Turner R."/>
            <person name="Venter E."/>
            <person name="Wang A.H."/>
            <person name="Wang X."/>
            <person name="Wang Z.-Y."/>
            <person name="Wassarman D.A."/>
            <person name="Weinstock G.M."/>
            <person name="Weissenbach J."/>
            <person name="Williams S.M."/>
            <person name="Woodage T."/>
            <person name="Worley K.C."/>
            <person name="Wu D."/>
            <person name="Yang S."/>
            <person name="Yao Q.A."/>
            <person name="Ye J."/>
            <person name="Yeh R.-F."/>
            <person name="Zaveri J.S."/>
            <person name="Zhan M."/>
            <person name="Zhang G."/>
            <person name="Zhao Q."/>
            <person name="Zheng L."/>
            <person name="Zheng X.H."/>
            <person name="Zhong F.N."/>
            <person name="Zhong W."/>
            <person name="Zhou X."/>
            <person name="Zhu S.C."/>
            <person name="Zhu X."/>
            <person name="Smith H.O."/>
            <person name="Gibbs R.A."/>
            <person name="Myers E.W."/>
            <person name="Rubin G.M."/>
            <person name="Venter J.C."/>
        </authorList>
    </citation>
    <scope>NUCLEOTIDE SEQUENCE [LARGE SCALE GENOMIC DNA]</scope>
    <source>
        <strain>Berkeley</strain>
    </source>
</reference>
<reference key="3">
    <citation type="journal article" date="2002" name="Genome Biol.">
        <title>Annotation of the Drosophila melanogaster euchromatic genome: a systematic review.</title>
        <authorList>
            <person name="Misra S."/>
            <person name="Crosby M.A."/>
            <person name="Mungall C.J."/>
            <person name="Matthews B.B."/>
            <person name="Campbell K.S."/>
            <person name="Hradecky P."/>
            <person name="Huang Y."/>
            <person name="Kaminker J.S."/>
            <person name="Millburn G.H."/>
            <person name="Prochnik S.E."/>
            <person name="Smith C.D."/>
            <person name="Tupy J.L."/>
            <person name="Whitfield E.J."/>
            <person name="Bayraktaroglu L."/>
            <person name="Berman B.P."/>
            <person name="Bettencourt B.R."/>
            <person name="Celniker S.E."/>
            <person name="de Grey A.D.N.J."/>
            <person name="Drysdale R.A."/>
            <person name="Harris N.L."/>
            <person name="Richter J."/>
            <person name="Russo S."/>
            <person name="Schroeder A.J."/>
            <person name="Shu S.Q."/>
            <person name="Stapleton M."/>
            <person name="Yamada C."/>
            <person name="Ashburner M."/>
            <person name="Gelbart W.M."/>
            <person name="Rubin G.M."/>
            <person name="Lewis S.E."/>
        </authorList>
    </citation>
    <scope>GENOME REANNOTATION</scope>
    <source>
        <strain>Berkeley</strain>
    </source>
</reference>
<reference key="4">
    <citation type="journal article" date="2000" name="Science">
        <title>From sequence to chromosome: the tip of the X chromosome of D. melanogaster.</title>
        <authorList>
            <person name="Benos P.V."/>
            <person name="Gatt M.K."/>
            <person name="Ashburner M."/>
            <person name="Murphy L."/>
            <person name="Harris D."/>
            <person name="Barrell B.G."/>
            <person name="Ferraz C."/>
            <person name="Vidal S."/>
            <person name="Brun C."/>
            <person name="Demailles J."/>
            <person name="Cadieu E."/>
            <person name="Dreano S."/>
            <person name="Gloux S."/>
            <person name="Lelaure V."/>
            <person name="Mottier S."/>
            <person name="Galibert F."/>
            <person name="Borkova D."/>
            <person name="Minana B."/>
            <person name="Kafatos F.C."/>
            <person name="Louis C."/>
            <person name="Siden-Kiamos I."/>
            <person name="Bolshakov S."/>
            <person name="Papagiannakis G."/>
            <person name="Spanos L."/>
            <person name="Cox S."/>
            <person name="Madueno E."/>
            <person name="de Pablos B."/>
            <person name="Modolell J."/>
            <person name="Peter A."/>
            <person name="Schoettler P."/>
            <person name="Werner M."/>
            <person name="Mourkioti F."/>
            <person name="Beinert N."/>
            <person name="Dowe G."/>
            <person name="Schaefer U."/>
            <person name="Jaeckle H."/>
            <person name="Bucheton A."/>
            <person name="Callister D.M."/>
            <person name="Campbell L.A."/>
            <person name="Darlamitsou A."/>
            <person name="Henderson N.S."/>
            <person name="McMillan P.J."/>
            <person name="Salles C."/>
            <person name="Tait E.A."/>
            <person name="Valenti P."/>
            <person name="Saunders R.D.C."/>
            <person name="Glover D.M."/>
        </authorList>
    </citation>
    <scope>NUCLEOTIDE SEQUENCE [LARGE SCALE GENOMIC DNA]</scope>
    <source>
        <strain>Oregon-R</strain>
    </source>
</reference>
<reference key="5">
    <citation type="journal article" date="2002" name="Genome Biol.">
        <title>A Drosophila full-length cDNA resource.</title>
        <authorList>
            <person name="Stapleton M."/>
            <person name="Carlson J.W."/>
            <person name="Brokstein P."/>
            <person name="Yu C."/>
            <person name="Champe M."/>
            <person name="George R.A."/>
            <person name="Guarin H."/>
            <person name="Kronmiller B."/>
            <person name="Pacleb J.M."/>
            <person name="Park S."/>
            <person name="Wan K.H."/>
            <person name="Rubin G.M."/>
            <person name="Celniker S.E."/>
        </authorList>
    </citation>
    <scope>NUCLEOTIDE SEQUENCE [LARGE SCALE MRNA]</scope>
    <source>
        <strain>Berkeley</strain>
        <tissue>Head</tissue>
    </source>
</reference>
<reference key="6">
    <citation type="submission" date="1997-10" db="EMBL/GenBank/DDBJ databases">
        <title>Evidence for non-neutral evolution around the cytochrome p450 gene cluster on the Drosophila melanogaster X chromosome.</title>
        <authorList>
            <person name="Phillips K.S."/>
            <person name="Begun D.J."/>
            <person name="Aquadro C.F."/>
        </authorList>
    </citation>
    <scope>NUCLEOTIDE SEQUENCE [GENOMIC DNA] OF 4-501</scope>
    <source>
        <strain>CAM-1</strain>
        <strain>CAM-12</strain>
        <strain>CAM-14</strain>
        <strain>CAM-19</strain>
        <strain>CAM-2</strain>
        <strain>CAM-3</strain>
        <strain>CAM-38</strain>
        <strain>CAM-41</strain>
        <strain>CAM-42</strain>
        <strain>CAM-44</strain>
        <strain>CAM-48</strain>
        <strain>CAM-8</strain>
        <strain>CAM-9</strain>
    </source>
</reference>
<feature type="chain" id="PRO_0000051834" description="Cytochrome P450 4d2">
    <location>
        <begin position="1"/>
        <end position="501"/>
    </location>
</feature>
<feature type="binding site" description="covalent" evidence="1">
    <location>
        <position position="311"/>
    </location>
    <ligand>
        <name>heme</name>
        <dbReference type="ChEBI" id="CHEBI:30413"/>
    </ligand>
</feature>
<feature type="binding site" description="axial binding residue" evidence="1">
    <location>
        <position position="449"/>
    </location>
    <ligand>
        <name>heme</name>
        <dbReference type="ChEBI" id="CHEBI:30413"/>
    </ligand>
    <ligandPart>
        <name>Fe</name>
        <dbReference type="ChEBI" id="CHEBI:18248"/>
    </ligandPart>
</feature>
<feature type="sequence variant" description="In strain: CAM-44, CAM-48 and Berkeley.">
    <original>K</original>
    <variation>M</variation>
    <location>
        <position position="163"/>
    </location>
</feature>
<feature type="sequence conflict" description="In Ref. 2; CAA15698." evidence="2" ref="2">
    <location>
        <begin position="2"/>
        <end position="25"/>
    </location>
</feature>
<feature type="sequence conflict" description="In Ref. 1; CAA80549." evidence="2" ref="1">
    <original>I</original>
    <variation>A</variation>
    <location>
        <position position="30"/>
    </location>
</feature>
<feature type="sequence conflict" description="In Ref. 1; CAA53568/CAA80549." evidence="2" ref="1">
    <original>A</original>
    <variation>R</variation>
    <location>
        <position position="160"/>
    </location>
</feature>
<feature type="sequence conflict" description="In Ref. 1; CAA53568/CAA80549." evidence="2" ref="1">
    <original>LRSANGVHLGLKPR</original>
    <variation>CGRPTAFIL</variation>
    <location>
        <begin position="487"/>
        <end position="500"/>
    </location>
</feature>
<keyword id="KW-0256">Endoplasmic reticulum</keyword>
<keyword id="KW-0349">Heme</keyword>
<keyword id="KW-0408">Iron</keyword>
<keyword id="KW-0472">Membrane</keyword>
<keyword id="KW-0479">Metal-binding</keyword>
<keyword id="KW-0492">Microsome</keyword>
<keyword id="KW-0503">Monooxygenase</keyword>
<keyword id="KW-0560">Oxidoreductase</keyword>
<keyword id="KW-1185">Reference proteome</keyword>
<proteinExistence type="evidence at transcript level"/>
<dbReference type="EC" id="1.14.-.-"/>
<dbReference type="EMBL" id="X75955">
    <property type="protein sequence ID" value="CAA53568.1"/>
    <property type="molecule type" value="Genomic_DNA"/>
</dbReference>
<dbReference type="EMBL" id="Z23005">
    <property type="protein sequence ID" value="CAA80549.1"/>
    <property type="molecule type" value="Genomic_DNA"/>
</dbReference>
<dbReference type="EMBL" id="AE014298">
    <property type="protein sequence ID" value="AAF45741.1"/>
    <property type="molecule type" value="Genomic_DNA"/>
</dbReference>
<dbReference type="EMBL" id="AL009194">
    <property type="protein sequence ID" value="CAA15698.1"/>
    <property type="molecule type" value="Genomic_DNA"/>
</dbReference>
<dbReference type="EMBL" id="AY118763">
    <property type="protein sequence ID" value="AAM50623.1"/>
    <property type="molecule type" value="mRNA"/>
</dbReference>
<dbReference type="EMBL" id="AF017006">
    <property type="protein sequence ID" value="AAB71169.1"/>
    <property type="molecule type" value="Genomic_DNA"/>
</dbReference>
<dbReference type="EMBL" id="AF017007">
    <property type="protein sequence ID" value="AAB71170.1"/>
    <property type="molecule type" value="Genomic_DNA"/>
</dbReference>
<dbReference type="EMBL" id="AF017008">
    <property type="protein sequence ID" value="AAB71171.1"/>
    <property type="molecule type" value="Genomic_DNA"/>
</dbReference>
<dbReference type="EMBL" id="AF017009">
    <property type="protein sequence ID" value="AAB71172.1"/>
    <property type="molecule type" value="Genomic_DNA"/>
</dbReference>
<dbReference type="EMBL" id="AF017010">
    <property type="protein sequence ID" value="AAB71173.1"/>
    <property type="molecule type" value="Genomic_DNA"/>
</dbReference>
<dbReference type="EMBL" id="AF017011">
    <property type="protein sequence ID" value="AAB71174.1"/>
    <property type="molecule type" value="Genomic_DNA"/>
</dbReference>
<dbReference type="EMBL" id="AF017012">
    <property type="protein sequence ID" value="AAB71175.1"/>
    <property type="molecule type" value="Genomic_DNA"/>
</dbReference>
<dbReference type="EMBL" id="AF017013">
    <property type="protein sequence ID" value="AAB71176.1"/>
    <property type="molecule type" value="Genomic_DNA"/>
</dbReference>
<dbReference type="EMBL" id="AF017014">
    <property type="protein sequence ID" value="AAB71177.1"/>
    <property type="molecule type" value="Genomic_DNA"/>
</dbReference>
<dbReference type="EMBL" id="AF017015">
    <property type="protein sequence ID" value="AAB71178.1"/>
    <property type="molecule type" value="Genomic_DNA"/>
</dbReference>
<dbReference type="EMBL" id="AF017016">
    <property type="protein sequence ID" value="AAB71179.1"/>
    <property type="molecule type" value="Genomic_DNA"/>
</dbReference>
<dbReference type="EMBL" id="AF017017">
    <property type="protein sequence ID" value="AAB71180.1"/>
    <property type="molecule type" value="Genomic_DNA"/>
</dbReference>
<dbReference type="EMBL" id="AF017018">
    <property type="protein sequence ID" value="AAB71181.1"/>
    <property type="molecule type" value="Genomic_DNA"/>
</dbReference>
<dbReference type="PIR" id="S41192">
    <property type="entry name" value="S41192"/>
</dbReference>
<dbReference type="RefSeq" id="NP_001284806.1">
    <property type="nucleotide sequence ID" value="NM_001297877.1"/>
</dbReference>
<dbReference type="RefSeq" id="NP_525043.1">
    <property type="nucleotide sequence ID" value="NM_080304.3"/>
</dbReference>
<dbReference type="SMR" id="Q27589"/>
<dbReference type="FunCoup" id="Q27589">
    <property type="interactions" value="20"/>
</dbReference>
<dbReference type="IntAct" id="Q27589">
    <property type="interactions" value="1"/>
</dbReference>
<dbReference type="STRING" id="7227.FBpp0311678"/>
<dbReference type="PaxDb" id="7227-FBpp0070371"/>
<dbReference type="DNASU" id="31192"/>
<dbReference type="GeneID" id="31192"/>
<dbReference type="KEGG" id="dme:Dmel_CG3466"/>
<dbReference type="AGR" id="FB:FBgn0011576"/>
<dbReference type="CTD" id="31192"/>
<dbReference type="FlyBase" id="FBgn0011576">
    <property type="gene designation" value="Cyp4d2"/>
</dbReference>
<dbReference type="VEuPathDB" id="VectorBase:FBgn0011576"/>
<dbReference type="eggNOG" id="KOG0157">
    <property type="taxonomic scope" value="Eukaryota"/>
</dbReference>
<dbReference type="HOGENOM" id="CLU_001570_5_1_1"/>
<dbReference type="InParanoid" id="Q27589"/>
<dbReference type="OrthoDB" id="1470350at2759"/>
<dbReference type="PhylomeDB" id="Q27589"/>
<dbReference type="Reactome" id="R-DME-193144">
    <property type="pathway name" value="Estrogen biosynthesis"/>
</dbReference>
<dbReference type="Reactome" id="R-DME-211976">
    <property type="pathway name" value="Endogenous sterols"/>
</dbReference>
<dbReference type="SignaLink" id="Q27589"/>
<dbReference type="BioGRID-ORCS" id="31192">
    <property type="hits" value="0 hits in 3 CRISPR screens"/>
</dbReference>
<dbReference type="GenomeRNAi" id="31192"/>
<dbReference type="PRO" id="PR:Q27589"/>
<dbReference type="Proteomes" id="UP000000803">
    <property type="component" value="Chromosome X"/>
</dbReference>
<dbReference type="ExpressionAtlas" id="Q27589">
    <property type="expression patterns" value="baseline and differential"/>
</dbReference>
<dbReference type="GO" id="GO:0005789">
    <property type="term" value="C:endoplasmic reticulum membrane"/>
    <property type="evidence" value="ECO:0007669"/>
    <property type="project" value="UniProtKB-SubCell"/>
</dbReference>
<dbReference type="GO" id="GO:0020037">
    <property type="term" value="F:heme binding"/>
    <property type="evidence" value="ECO:0007669"/>
    <property type="project" value="InterPro"/>
</dbReference>
<dbReference type="GO" id="GO:0005506">
    <property type="term" value="F:iron ion binding"/>
    <property type="evidence" value="ECO:0007669"/>
    <property type="project" value="InterPro"/>
</dbReference>
<dbReference type="GO" id="GO:0004497">
    <property type="term" value="F:monooxygenase activity"/>
    <property type="evidence" value="ECO:0007669"/>
    <property type="project" value="UniProtKB-KW"/>
</dbReference>
<dbReference type="GO" id="GO:0016705">
    <property type="term" value="F:oxidoreductase activity, acting on paired donors, with incorporation or reduction of molecular oxygen"/>
    <property type="evidence" value="ECO:0007669"/>
    <property type="project" value="InterPro"/>
</dbReference>
<dbReference type="CDD" id="cd20628">
    <property type="entry name" value="CYP4"/>
    <property type="match status" value="1"/>
</dbReference>
<dbReference type="FunFam" id="1.10.630.10:FF:000182">
    <property type="entry name" value="Cytochrome P450 3A4"/>
    <property type="match status" value="1"/>
</dbReference>
<dbReference type="Gene3D" id="1.10.630.10">
    <property type="entry name" value="Cytochrome P450"/>
    <property type="match status" value="1"/>
</dbReference>
<dbReference type="InterPro" id="IPR001128">
    <property type="entry name" value="Cyt_P450"/>
</dbReference>
<dbReference type="InterPro" id="IPR017972">
    <property type="entry name" value="Cyt_P450_CS"/>
</dbReference>
<dbReference type="InterPro" id="IPR002401">
    <property type="entry name" value="Cyt_P450_E_grp-I"/>
</dbReference>
<dbReference type="InterPro" id="IPR036396">
    <property type="entry name" value="Cyt_P450_sf"/>
</dbReference>
<dbReference type="InterPro" id="IPR050196">
    <property type="entry name" value="Cytochrome_P450_Monoox"/>
</dbReference>
<dbReference type="PANTHER" id="PTHR24291:SF187">
    <property type="entry name" value="CYTOCHROME P450 4AE1-RELATED"/>
    <property type="match status" value="1"/>
</dbReference>
<dbReference type="PANTHER" id="PTHR24291">
    <property type="entry name" value="CYTOCHROME P450 FAMILY 4"/>
    <property type="match status" value="1"/>
</dbReference>
<dbReference type="Pfam" id="PF00067">
    <property type="entry name" value="p450"/>
    <property type="match status" value="1"/>
</dbReference>
<dbReference type="PRINTS" id="PR00463">
    <property type="entry name" value="EP450I"/>
</dbReference>
<dbReference type="PRINTS" id="PR00385">
    <property type="entry name" value="P450"/>
</dbReference>
<dbReference type="SUPFAM" id="SSF48264">
    <property type="entry name" value="Cytochrome P450"/>
    <property type="match status" value="1"/>
</dbReference>
<dbReference type="PROSITE" id="PS00086">
    <property type="entry name" value="CYTOCHROME_P450"/>
    <property type="match status" value="1"/>
</dbReference>